<proteinExistence type="inferred from homology"/>
<protein>
    <recommendedName>
        <fullName evidence="2">Translation initiation factor IF-1</fullName>
    </recommendedName>
</protein>
<gene>
    <name evidence="2" type="primary">infA</name>
    <name type="ordered locus">c1021</name>
</gene>
<accession>P69223</accession>
<accession>P02998</accession>
<comment type="function">
    <text evidence="2">One of the essential components for the initiation of protein synthesis. Stabilizes the binding of IF-2 and IF-3 on the 30S subunit to which N-formylmethionyl-tRNA(fMet) subsequently binds. Helps modulate mRNA selection, yielding the 30S pre-initiation complex (PIC). Upon addition of the 50S ribosomal subunit IF-1, IF-2 and IF-3 are released leaving the mature 70S translation initiation complex.</text>
</comment>
<comment type="subunit">
    <text evidence="2">Component of the 30S ribosomal translation pre-initiation complex which assembles on the 30S ribosome in the order IF-2 and IF-3, IF-1 and N-formylmethionyl-tRNA(fMet); mRNA recruitment can occur at any time during PIC assembly.</text>
</comment>
<comment type="subcellular location">
    <subcellularLocation>
        <location evidence="2">Cytoplasm</location>
    </subcellularLocation>
</comment>
<comment type="similarity">
    <text evidence="2">Belongs to the IF-1 family.</text>
</comment>
<organism>
    <name type="scientific">Escherichia coli O6:H1 (strain CFT073 / ATCC 700928 / UPEC)</name>
    <dbReference type="NCBI Taxonomy" id="199310"/>
    <lineage>
        <taxon>Bacteria</taxon>
        <taxon>Pseudomonadati</taxon>
        <taxon>Pseudomonadota</taxon>
        <taxon>Gammaproteobacteria</taxon>
        <taxon>Enterobacterales</taxon>
        <taxon>Enterobacteriaceae</taxon>
        <taxon>Escherichia</taxon>
    </lineage>
</organism>
<name>IF1_ECOL6</name>
<evidence type="ECO:0000250" key="1"/>
<evidence type="ECO:0000255" key="2">
    <source>
        <dbReference type="HAMAP-Rule" id="MF_00075"/>
    </source>
</evidence>
<dbReference type="EMBL" id="AE014075">
    <property type="protein sequence ID" value="AAN79493.1"/>
    <property type="molecule type" value="Genomic_DNA"/>
</dbReference>
<dbReference type="RefSeq" id="WP_001040187.1">
    <property type="nucleotide sequence ID" value="NZ_CP051263.1"/>
</dbReference>
<dbReference type="SMR" id="P69223"/>
<dbReference type="STRING" id="199310.c1021"/>
<dbReference type="GeneID" id="93776536"/>
<dbReference type="KEGG" id="ecc:c1021"/>
<dbReference type="eggNOG" id="COG0361">
    <property type="taxonomic scope" value="Bacteria"/>
</dbReference>
<dbReference type="HOGENOM" id="CLU_151267_1_0_6"/>
<dbReference type="BioCyc" id="ECOL199310:C1021-MONOMER"/>
<dbReference type="Proteomes" id="UP000001410">
    <property type="component" value="Chromosome"/>
</dbReference>
<dbReference type="GO" id="GO:0005829">
    <property type="term" value="C:cytosol"/>
    <property type="evidence" value="ECO:0007669"/>
    <property type="project" value="TreeGrafter"/>
</dbReference>
<dbReference type="GO" id="GO:0043022">
    <property type="term" value="F:ribosome binding"/>
    <property type="evidence" value="ECO:0007669"/>
    <property type="project" value="UniProtKB-UniRule"/>
</dbReference>
<dbReference type="GO" id="GO:0019843">
    <property type="term" value="F:rRNA binding"/>
    <property type="evidence" value="ECO:0007669"/>
    <property type="project" value="UniProtKB-UniRule"/>
</dbReference>
<dbReference type="GO" id="GO:0003743">
    <property type="term" value="F:translation initiation factor activity"/>
    <property type="evidence" value="ECO:0007669"/>
    <property type="project" value="UniProtKB-UniRule"/>
</dbReference>
<dbReference type="CDD" id="cd04451">
    <property type="entry name" value="S1_IF1"/>
    <property type="match status" value="1"/>
</dbReference>
<dbReference type="FunFam" id="2.40.50.140:FF:000002">
    <property type="entry name" value="Translation initiation factor IF-1"/>
    <property type="match status" value="1"/>
</dbReference>
<dbReference type="Gene3D" id="2.40.50.140">
    <property type="entry name" value="Nucleic acid-binding proteins"/>
    <property type="match status" value="1"/>
</dbReference>
<dbReference type="HAMAP" id="MF_00075">
    <property type="entry name" value="IF_1"/>
    <property type="match status" value="1"/>
</dbReference>
<dbReference type="InterPro" id="IPR012340">
    <property type="entry name" value="NA-bd_OB-fold"/>
</dbReference>
<dbReference type="InterPro" id="IPR006196">
    <property type="entry name" value="RNA-binding_domain_S1_IF1"/>
</dbReference>
<dbReference type="InterPro" id="IPR003029">
    <property type="entry name" value="S1_domain"/>
</dbReference>
<dbReference type="InterPro" id="IPR004368">
    <property type="entry name" value="TIF_IF1"/>
</dbReference>
<dbReference type="NCBIfam" id="TIGR00008">
    <property type="entry name" value="infA"/>
    <property type="match status" value="1"/>
</dbReference>
<dbReference type="PANTHER" id="PTHR33370">
    <property type="entry name" value="TRANSLATION INITIATION FACTOR IF-1, CHLOROPLASTIC"/>
    <property type="match status" value="1"/>
</dbReference>
<dbReference type="PANTHER" id="PTHR33370:SF1">
    <property type="entry name" value="TRANSLATION INITIATION FACTOR IF-1, CHLOROPLASTIC"/>
    <property type="match status" value="1"/>
</dbReference>
<dbReference type="Pfam" id="PF01176">
    <property type="entry name" value="eIF-1a"/>
    <property type="match status" value="1"/>
</dbReference>
<dbReference type="SMART" id="SM00316">
    <property type="entry name" value="S1"/>
    <property type="match status" value="1"/>
</dbReference>
<dbReference type="SUPFAM" id="SSF50249">
    <property type="entry name" value="Nucleic acid-binding proteins"/>
    <property type="match status" value="1"/>
</dbReference>
<dbReference type="PROSITE" id="PS50832">
    <property type="entry name" value="S1_IF1_TYPE"/>
    <property type="match status" value="1"/>
</dbReference>
<sequence>MAKEDNIEMQGTVLETLPNTMFRVELENGHVVTAHISGKMRKNYIRILTGDKVTVELTPYDLSKGRIVFRSR</sequence>
<reference key="1">
    <citation type="journal article" date="2002" name="Proc. Natl. Acad. Sci. U.S.A.">
        <title>Extensive mosaic structure revealed by the complete genome sequence of uropathogenic Escherichia coli.</title>
        <authorList>
            <person name="Welch R.A."/>
            <person name="Burland V."/>
            <person name="Plunkett G. III"/>
            <person name="Redford P."/>
            <person name="Roesch P."/>
            <person name="Rasko D."/>
            <person name="Buckles E.L."/>
            <person name="Liou S.-R."/>
            <person name="Boutin A."/>
            <person name="Hackett J."/>
            <person name="Stroud D."/>
            <person name="Mayhew G.F."/>
            <person name="Rose D.J."/>
            <person name="Zhou S."/>
            <person name="Schwartz D.C."/>
            <person name="Perna N.T."/>
            <person name="Mobley H.L.T."/>
            <person name="Donnenberg M.S."/>
            <person name="Blattner F.R."/>
        </authorList>
    </citation>
    <scope>NUCLEOTIDE SEQUENCE [LARGE SCALE GENOMIC DNA]</scope>
    <source>
        <strain>CFT073 / ATCC 700928 / UPEC</strain>
    </source>
</reference>
<feature type="initiator methionine" description="Removed" evidence="1">
    <location>
        <position position="1"/>
    </location>
</feature>
<feature type="chain" id="PRO_0000095786" description="Translation initiation factor IF-1">
    <location>
        <begin position="2"/>
        <end position="72"/>
    </location>
</feature>
<feature type="domain" description="S1-like" evidence="2">
    <location>
        <begin position="2"/>
        <end position="72"/>
    </location>
</feature>
<keyword id="KW-0963">Cytoplasm</keyword>
<keyword id="KW-0396">Initiation factor</keyword>
<keyword id="KW-0648">Protein biosynthesis</keyword>
<keyword id="KW-1185">Reference proteome</keyword>
<keyword id="KW-0694">RNA-binding</keyword>
<keyword id="KW-0699">rRNA-binding</keyword>